<protein>
    <recommendedName>
        <fullName>Uncharacterized protein aq_2085</fullName>
    </recommendedName>
</protein>
<name>Y2085_AQUAE</name>
<dbReference type="EMBL" id="AE000657">
    <property type="protein sequence ID" value="AAC07831.1"/>
    <property type="molecule type" value="Genomic_DNA"/>
</dbReference>
<dbReference type="PIR" id="F70478">
    <property type="entry name" value="F70478"/>
</dbReference>
<dbReference type="RefSeq" id="NP_214427.1">
    <property type="nucleotide sequence ID" value="NC_000918.1"/>
</dbReference>
<dbReference type="RefSeq" id="WP_010881363.1">
    <property type="nucleotide sequence ID" value="NC_000918.1"/>
</dbReference>
<dbReference type="SMR" id="O67858"/>
<dbReference type="STRING" id="224324.aq_2085"/>
<dbReference type="EnsemblBacteria" id="AAC07831">
    <property type="protein sequence ID" value="AAC07831"/>
    <property type="gene ID" value="aq_2085"/>
</dbReference>
<dbReference type="KEGG" id="aae:aq_2085"/>
<dbReference type="HOGENOM" id="CLU_1641452_0_0_0"/>
<dbReference type="InParanoid" id="O67858"/>
<dbReference type="OrthoDB" id="14572at2"/>
<dbReference type="Proteomes" id="UP000000798">
    <property type="component" value="Chromosome"/>
</dbReference>
<gene>
    <name type="ordered locus">aq_2085</name>
</gene>
<sequence length="167" mass="19975">MEEKTRKLKTLERLLIYDRLLRFALDLLTGIREELKADIDETRLIAESVLEEKEKKVVEDFILKIEELFLLKTDEVLDHIYDEYEVFNFDVTFLSAIPEEIERELERLALIDTVNTKLQLLIDILDEAFCLIPEENERIRVVLTPFRVYKELLEHAIDFNNKFKEKT</sequence>
<reference key="1">
    <citation type="journal article" date="1998" name="Nature">
        <title>The complete genome of the hyperthermophilic bacterium Aquifex aeolicus.</title>
        <authorList>
            <person name="Deckert G."/>
            <person name="Warren P.V."/>
            <person name="Gaasterland T."/>
            <person name="Young W.G."/>
            <person name="Lenox A.L."/>
            <person name="Graham D.E."/>
            <person name="Overbeek R."/>
            <person name="Snead M.A."/>
            <person name="Keller M."/>
            <person name="Aujay M."/>
            <person name="Huber R."/>
            <person name="Feldman R.A."/>
            <person name="Short J.M."/>
            <person name="Olsen G.J."/>
            <person name="Swanson R.V."/>
        </authorList>
    </citation>
    <scope>NUCLEOTIDE SEQUENCE [LARGE SCALE GENOMIC DNA]</scope>
    <source>
        <strain>VF5</strain>
    </source>
</reference>
<keyword id="KW-0175">Coiled coil</keyword>
<keyword id="KW-1185">Reference proteome</keyword>
<proteinExistence type="predicted"/>
<evidence type="ECO:0000255" key="1"/>
<feature type="chain" id="PRO_0000186968" description="Uncharacterized protein aq_2085">
    <location>
        <begin position="1"/>
        <end position="167"/>
    </location>
</feature>
<feature type="coiled-coil region" evidence="1">
    <location>
        <begin position="28"/>
        <end position="59"/>
    </location>
</feature>
<accession>O67858</accession>
<organism>
    <name type="scientific">Aquifex aeolicus (strain VF5)</name>
    <dbReference type="NCBI Taxonomy" id="224324"/>
    <lineage>
        <taxon>Bacteria</taxon>
        <taxon>Pseudomonadati</taxon>
        <taxon>Aquificota</taxon>
        <taxon>Aquificia</taxon>
        <taxon>Aquificales</taxon>
        <taxon>Aquificaceae</taxon>
        <taxon>Aquifex</taxon>
    </lineage>
</organism>